<gene>
    <name evidence="1" type="primary">valS</name>
    <name type="ordered locus">SAS1592</name>
</gene>
<accession>Q6G8R2</accession>
<sequence>MEMKPKYDPREVEAGRYEEWVKNGYFKPSEDKSKETYTIVIPPPNVTGKLHLGHAWDTTLQDIITRMKRMQGYDTLYLPGMDHAGIATQAKVEAKLNEQGITRYDLGREKFLEQAWDWKEEYASFIRAQWAKLGLGLDYSRERFTLDEGLSKAVKKVFVDLYNKGIIYRGERIINWDPKARTALSDIEVIHEDVQGAFYHFKYPYADGEGFIEIATTRPETMLGDTAIVVNPNDERYKDVIGKTVILPIVGRELPILADEYVDIDFGSGAMKVTPAHDPNDFEIGQRHQLENIIVMDENGKMNDKAGKYEGMDRFDCRKQLVKDLKEQDLVIKIEDHVHSVGHSERSGAVVEPYLSTQWFVRMEDLAKRSLDNQKTDDRIDFYPQRFEHTFNQWMENIRDWTISRQLWWGHQIPAWYHKETGEIYVGEEAPTDIENWQQDEDVLDTWFSSALWPFSTLGWPDLESEDFKRYYPTNALVTGYDIIFFWVARMIFQGLEFTDRRPFNDVLLHGLVRAEDGRKMSKSLGNGVDPMDVIDEYGADSLRYFLATGSSPGHDLRYSTEKVESVWNFINKIWNGARFSLMNIGEDFKVEDIDLSGNLSLADKWILTRLNETIATVTDLSDKYEFGEVGRALYNFIWDDFCDWYIEMSKIPMNSNDEEQKQVTRSVLSYTLDNIMRMLHPFMPFVTEKIWQSLPHEGDTIVKASWPEVRESLIFEESKQTMQQLVEIIKSVRQSRVEVNTPLSKEIPILIQAKDKEIETTLSQNKDYLIKFCNPSTLNISTDVEIPEKAMTSVVIAGKVVLPLEGLIDMDKEISRLEKELAKLQSELDRVDKKLSNENFVSKAPEKVINEEKRKKQDYQEKYDGVKARIEQLKA</sequence>
<organism>
    <name type="scientific">Staphylococcus aureus (strain MSSA476)</name>
    <dbReference type="NCBI Taxonomy" id="282459"/>
    <lineage>
        <taxon>Bacteria</taxon>
        <taxon>Bacillati</taxon>
        <taxon>Bacillota</taxon>
        <taxon>Bacilli</taxon>
        <taxon>Bacillales</taxon>
        <taxon>Staphylococcaceae</taxon>
        <taxon>Staphylococcus</taxon>
    </lineage>
</organism>
<comment type="function">
    <text evidence="1">Catalyzes the attachment of valine to tRNA(Val). As ValRS can inadvertently accommodate and process structurally similar amino acids such as threonine, to avoid such errors, it has a 'posttransfer' editing activity that hydrolyzes mischarged Thr-tRNA(Val) in a tRNA-dependent manner.</text>
</comment>
<comment type="catalytic activity">
    <reaction evidence="1">
        <text>tRNA(Val) + L-valine + ATP = L-valyl-tRNA(Val) + AMP + diphosphate</text>
        <dbReference type="Rhea" id="RHEA:10704"/>
        <dbReference type="Rhea" id="RHEA-COMP:9672"/>
        <dbReference type="Rhea" id="RHEA-COMP:9708"/>
        <dbReference type="ChEBI" id="CHEBI:30616"/>
        <dbReference type="ChEBI" id="CHEBI:33019"/>
        <dbReference type="ChEBI" id="CHEBI:57762"/>
        <dbReference type="ChEBI" id="CHEBI:78442"/>
        <dbReference type="ChEBI" id="CHEBI:78537"/>
        <dbReference type="ChEBI" id="CHEBI:456215"/>
        <dbReference type="EC" id="6.1.1.9"/>
    </reaction>
</comment>
<comment type="subunit">
    <text evidence="1">Monomer.</text>
</comment>
<comment type="subcellular location">
    <subcellularLocation>
        <location evidence="1">Cytoplasm</location>
    </subcellularLocation>
</comment>
<comment type="domain">
    <text evidence="1">ValRS has two distinct active sites: one for aminoacylation and one for editing. The misactivated threonine is translocated from the active site to the editing site.</text>
</comment>
<comment type="domain">
    <text evidence="1">The C-terminal coiled-coil domain is crucial for aminoacylation activity.</text>
</comment>
<comment type="similarity">
    <text evidence="1">Belongs to the class-I aminoacyl-tRNA synthetase family. ValS type 1 subfamily.</text>
</comment>
<reference key="1">
    <citation type="journal article" date="2004" name="Proc. Natl. Acad. Sci. U.S.A.">
        <title>Complete genomes of two clinical Staphylococcus aureus strains: evidence for the rapid evolution of virulence and drug resistance.</title>
        <authorList>
            <person name="Holden M.T.G."/>
            <person name="Feil E.J."/>
            <person name="Lindsay J.A."/>
            <person name="Peacock S.J."/>
            <person name="Day N.P.J."/>
            <person name="Enright M.C."/>
            <person name="Foster T.J."/>
            <person name="Moore C.E."/>
            <person name="Hurst L."/>
            <person name="Atkin R."/>
            <person name="Barron A."/>
            <person name="Bason N."/>
            <person name="Bentley S.D."/>
            <person name="Chillingworth C."/>
            <person name="Chillingworth T."/>
            <person name="Churcher C."/>
            <person name="Clark L."/>
            <person name="Corton C."/>
            <person name="Cronin A."/>
            <person name="Doggett J."/>
            <person name="Dowd L."/>
            <person name="Feltwell T."/>
            <person name="Hance Z."/>
            <person name="Harris B."/>
            <person name="Hauser H."/>
            <person name="Holroyd S."/>
            <person name="Jagels K."/>
            <person name="James K.D."/>
            <person name="Lennard N."/>
            <person name="Line A."/>
            <person name="Mayes R."/>
            <person name="Moule S."/>
            <person name="Mungall K."/>
            <person name="Ormond D."/>
            <person name="Quail M.A."/>
            <person name="Rabbinowitsch E."/>
            <person name="Rutherford K.M."/>
            <person name="Sanders M."/>
            <person name="Sharp S."/>
            <person name="Simmonds M."/>
            <person name="Stevens K."/>
            <person name="Whitehead S."/>
            <person name="Barrell B.G."/>
            <person name="Spratt B.G."/>
            <person name="Parkhill J."/>
        </authorList>
    </citation>
    <scope>NUCLEOTIDE SEQUENCE [LARGE SCALE GENOMIC DNA]</scope>
    <source>
        <strain>MSSA476</strain>
    </source>
</reference>
<dbReference type="EC" id="6.1.1.9" evidence="1"/>
<dbReference type="EMBL" id="BX571857">
    <property type="protein sequence ID" value="CAG43394.1"/>
    <property type="molecule type" value="Genomic_DNA"/>
</dbReference>
<dbReference type="RefSeq" id="WP_000425353.1">
    <property type="nucleotide sequence ID" value="NC_002953.3"/>
</dbReference>
<dbReference type="SMR" id="Q6G8R2"/>
<dbReference type="KEGG" id="sas:SAS1592"/>
<dbReference type="HOGENOM" id="CLU_001493_0_2_9"/>
<dbReference type="GO" id="GO:0005829">
    <property type="term" value="C:cytosol"/>
    <property type="evidence" value="ECO:0007669"/>
    <property type="project" value="TreeGrafter"/>
</dbReference>
<dbReference type="GO" id="GO:0002161">
    <property type="term" value="F:aminoacyl-tRNA deacylase activity"/>
    <property type="evidence" value="ECO:0007669"/>
    <property type="project" value="InterPro"/>
</dbReference>
<dbReference type="GO" id="GO:0005524">
    <property type="term" value="F:ATP binding"/>
    <property type="evidence" value="ECO:0007669"/>
    <property type="project" value="UniProtKB-UniRule"/>
</dbReference>
<dbReference type="GO" id="GO:0004832">
    <property type="term" value="F:valine-tRNA ligase activity"/>
    <property type="evidence" value="ECO:0007669"/>
    <property type="project" value="UniProtKB-UniRule"/>
</dbReference>
<dbReference type="GO" id="GO:0006438">
    <property type="term" value="P:valyl-tRNA aminoacylation"/>
    <property type="evidence" value="ECO:0007669"/>
    <property type="project" value="UniProtKB-UniRule"/>
</dbReference>
<dbReference type="CDD" id="cd07962">
    <property type="entry name" value="Anticodon_Ia_Val"/>
    <property type="match status" value="1"/>
</dbReference>
<dbReference type="CDD" id="cd00817">
    <property type="entry name" value="ValRS_core"/>
    <property type="match status" value="1"/>
</dbReference>
<dbReference type="FunFam" id="1.10.287.380:FF:000001">
    <property type="entry name" value="Valine--tRNA ligase"/>
    <property type="match status" value="1"/>
</dbReference>
<dbReference type="FunFam" id="1.10.730.10:FF:000014">
    <property type="entry name" value="Valine--tRNA ligase"/>
    <property type="match status" value="1"/>
</dbReference>
<dbReference type="FunFam" id="3.40.50.620:FF:000032">
    <property type="entry name" value="Valine--tRNA ligase"/>
    <property type="match status" value="1"/>
</dbReference>
<dbReference type="FunFam" id="3.40.50.620:FF:000098">
    <property type="entry name" value="Valine--tRNA ligase"/>
    <property type="match status" value="1"/>
</dbReference>
<dbReference type="FunFam" id="3.90.740.10:FF:000005">
    <property type="entry name" value="Valine--tRNA ligase, mitochondrial"/>
    <property type="match status" value="1"/>
</dbReference>
<dbReference type="Gene3D" id="3.40.50.620">
    <property type="entry name" value="HUPs"/>
    <property type="match status" value="2"/>
</dbReference>
<dbReference type="Gene3D" id="1.10.730.10">
    <property type="entry name" value="Isoleucyl-tRNA Synthetase, Domain 1"/>
    <property type="match status" value="1"/>
</dbReference>
<dbReference type="Gene3D" id="1.10.287.380">
    <property type="entry name" value="Valyl-tRNA synthetase, C-terminal domain"/>
    <property type="match status" value="1"/>
</dbReference>
<dbReference type="Gene3D" id="3.90.740.10">
    <property type="entry name" value="Valyl/Leucyl/Isoleucyl-tRNA synthetase, editing domain"/>
    <property type="match status" value="1"/>
</dbReference>
<dbReference type="HAMAP" id="MF_02004">
    <property type="entry name" value="Val_tRNA_synth_type1"/>
    <property type="match status" value="1"/>
</dbReference>
<dbReference type="InterPro" id="IPR001412">
    <property type="entry name" value="aa-tRNA-synth_I_CS"/>
</dbReference>
<dbReference type="InterPro" id="IPR002300">
    <property type="entry name" value="aa-tRNA-synth_Ia"/>
</dbReference>
<dbReference type="InterPro" id="IPR033705">
    <property type="entry name" value="Anticodon_Ia_Val"/>
</dbReference>
<dbReference type="InterPro" id="IPR013155">
    <property type="entry name" value="M/V/L/I-tRNA-synth_anticd-bd"/>
</dbReference>
<dbReference type="InterPro" id="IPR014729">
    <property type="entry name" value="Rossmann-like_a/b/a_fold"/>
</dbReference>
<dbReference type="InterPro" id="IPR010978">
    <property type="entry name" value="tRNA-bd_arm"/>
</dbReference>
<dbReference type="InterPro" id="IPR009080">
    <property type="entry name" value="tRNAsynth_Ia_anticodon-bd"/>
</dbReference>
<dbReference type="InterPro" id="IPR037118">
    <property type="entry name" value="Val-tRNA_synth_C_sf"/>
</dbReference>
<dbReference type="InterPro" id="IPR019499">
    <property type="entry name" value="Val-tRNA_synth_tRNA-bd"/>
</dbReference>
<dbReference type="InterPro" id="IPR009008">
    <property type="entry name" value="Val/Leu/Ile-tRNA-synth_edit"/>
</dbReference>
<dbReference type="InterPro" id="IPR002303">
    <property type="entry name" value="Valyl-tRNA_ligase"/>
</dbReference>
<dbReference type="NCBIfam" id="NF004349">
    <property type="entry name" value="PRK05729.1"/>
    <property type="match status" value="1"/>
</dbReference>
<dbReference type="NCBIfam" id="TIGR00422">
    <property type="entry name" value="valS"/>
    <property type="match status" value="1"/>
</dbReference>
<dbReference type="PANTHER" id="PTHR11946:SF93">
    <property type="entry name" value="VALINE--TRNA LIGASE, CHLOROPLASTIC_MITOCHONDRIAL 2"/>
    <property type="match status" value="1"/>
</dbReference>
<dbReference type="PANTHER" id="PTHR11946">
    <property type="entry name" value="VALYL-TRNA SYNTHETASES"/>
    <property type="match status" value="1"/>
</dbReference>
<dbReference type="Pfam" id="PF08264">
    <property type="entry name" value="Anticodon_1"/>
    <property type="match status" value="1"/>
</dbReference>
<dbReference type="Pfam" id="PF00133">
    <property type="entry name" value="tRNA-synt_1"/>
    <property type="match status" value="1"/>
</dbReference>
<dbReference type="Pfam" id="PF10458">
    <property type="entry name" value="Val_tRNA-synt_C"/>
    <property type="match status" value="1"/>
</dbReference>
<dbReference type="PRINTS" id="PR00986">
    <property type="entry name" value="TRNASYNTHVAL"/>
</dbReference>
<dbReference type="SUPFAM" id="SSF47323">
    <property type="entry name" value="Anticodon-binding domain of a subclass of class I aminoacyl-tRNA synthetases"/>
    <property type="match status" value="1"/>
</dbReference>
<dbReference type="SUPFAM" id="SSF52374">
    <property type="entry name" value="Nucleotidylyl transferase"/>
    <property type="match status" value="1"/>
</dbReference>
<dbReference type="SUPFAM" id="SSF46589">
    <property type="entry name" value="tRNA-binding arm"/>
    <property type="match status" value="1"/>
</dbReference>
<dbReference type="SUPFAM" id="SSF50677">
    <property type="entry name" value="ValRS/IleRS/LeuRS editing domain"/>
    <property type="match status" value="1"/>
</dbReference>
<dbReference type="PROSITE" id="PS00178">
    <property type="entry name" value="AA_TRNA_LIGASE_I"/>
    <property type="match status" value="1"/>
</dbReference>
<feature type="chain" id="PRO_0000224562" description="Valine--tRNA ligase">
    <location>
        <begin position="1"/>
        <end position="876"/>
    </location>
</feature>
<feature type="coiled-coil region" evidence="1">
    <location>
        <begin position="805"/>
        <end position="876"/>
    </location>
</feature>
<feature type="short sequence motif" description="'HIGH' region">
    <location>
        <begin position="44"/>
        <end position="54"/>
    </location>
</feature>
<feature type="short sequence motif" description="'KMSKS' region">
    <location>
        <begin position="520"/>
        <end position="524"/>
    </location>
</feature>
<feature type="binding site" evidence="1">
    <location>
        <position position="523"/>
    </location>
    <ligand>
        <name>ATP</name>
        <dbReference type="ChEBI" id="CHEBI:30616"/>
    </ligand>
</feature>
<keyword id="KW-0030">Aminoacyl-tRNA synthetase</keyword>
<keyword id="KW-0067">ATP-binding</keyword>
<keyword id="KW-0175">Coiled coil</keyword>
<keyword id="KW-0963">Cytoplasm</keyword>
<keyword id="KW-0436">Ligase</keyword>
<keyword id="KW-0547">Nucleotide-binding</keyword>
<keyword id="KW-0648">Protein biosynthesis</keyword>
<evidence type="ECO:0000255" key="1">
    <source>
        <dbReference type="HAMAP-Rule" id="MF_02004"/>
    </source>
</evidence>
<name>SYV_STAAS</name>
<protein>
    <recommendedName>
        <fullName evidence="1">Valine--tRNA ligase</fullName>
        <ecNumber evidence="1">6.1.1.9</ecNumber>
    </recommendedName>
    <alternativeName>
        <fullName evidence="1">Valyl-tRNA synthetase</fullName>
        <shortName evidence="1">ValRS</shortName>
    </alternativeName>
</protein>
<proteinExistence type="inferred from homology"/>